<organismHost>
    <name type="scientific">Gracula</name>
    <dbReference type="NCBI Taxonomy" id="116991"/>
</organismHost>
<organismHost>
    <name type="scientific">Psittaciformes</name>
    <dbReference type="NCBI Taxonomy" id="9223"/>
</organismHost>
<dbReference type="EMBL" id="AF080560">
    <property type="protein sequence ID" value="AAC69863.1"/>
    <property type="molecule type" value="Genomic_DNA"/>
</dbReference>
<dbReference type="Proteomes" id="UP000007454">
    <property type="component" value="Genome"/>
</dbReference>
<reference key="1">
    <citation type="journal article" date="1998" name="Virology">
        <title>Psittacine beak and feather disease virus nucleotide sequence analysis and its relationship to porcine circovirus, plant circoviruses, and chicken anaemia virus.</title>
        <authorList>
            <person name="Bassami M.R."/>
            <person name="Berryman D."/>
            <person name="Wilcox G.E."/>
            <person name="Raidal S.R."/>
        </authorList>
    </citation>
    <scope>NUCLEOTIDE SEQUENCE [GENOMIC DNA]</scope>
</reference>
<gene>
    <name type="ORF">ORF3</name>
</gene>
<protein>
    <recommendedName>
        <fullName>Uncharacterized protein ORF3</fullName>
    </recommendedName>
</protein>
<keyword id="KW-1185">Reference proteome</keyword>
<proteinExistence type="predicted"/>
<sequence>MPYVDFWELSRDFLHFASGHHGSNSSVERAVTVSRHNAQGEYNVPLFTAILLIISIATFSALKMGSRQQFLKRAQSLLIFKMKVALQMGGALLTLFASNDGIVEFVRPQRTDEFDLAVCRVVKGETPTATAGALLGRHGSRAGVILRRLRRRITPPFTPP</sequence>
<feature type="chain" id="PRO_0000319852" description="Uncharacterized protein ORF3">
    <location>
        <begin position="1"/>
        <end position="160"/>
    </location>
</feature>
<name>ORF3_BFDV</name>
<organism>
    <name type="scientific">Beak and feather disease virus</name>
    <name type="common">BFDV</name>
    <dbReference type="NCBI Taxonomy" id="77856"/>
    <lineage>
        <taxon>Viruses</taxon>
        <taxon>Monodnaviria</taxon>
        <taxon>Shotokuvirae</taxon>
        <taxon>Cressdnaviricota</taxon>
        <taxon>Arfiviricetes</taxon>
        <taxon>Cirlivirales</taxon>
        <taxon>Circoviridae</taxon>
        <taxon>Circovirus</taxon>
        <taxon>Circovirus parrot</taxon>
    </lineage>
</organism>
<accession>Q9YUD4</accession>